<evidence type="ECO:0000256" key="1">
    <source>
        <dbReference type="SAM" id="MobiDB-lite"/>
    </source>
</evidence>
<evidence type="ECO:0000305" key="2"/>
<reference key="1">
    <citation type="journal article" date="2001" name="Nature">
        <title>Genome sequence and gene compaction of the eukaryote parasite Encephalitozoon cuniculi.</title>
        <authorList>
            <person name="Katinka M.D."/>
            <person name="Duprat S."/>
            <person name="Cornillot E."/>
            <person name="Metenier G."/>
            <person name="Thomarat F."/>
            <person name="Prensier G."/>
            <person name="Barbe V."/>
            <person name="Peyretaillade E."/>
            <person name="Brottier P."/>
            <person name="Wincker P."/>
            <person name="Delbac F."/>
            <person name="El Alaoui H."/>
            <person name="Peyret P."/>
            <person name="Saurin W."/>
            <person name="Gouy M."/>
            <person name="Weissenbach J."/>
            <person name="Vivares C.P."/>
        </authorList>
    </citation>
    <scope>NUCLEOTIDE SEQUENCE [LARGE SCALE GENOMIC DNA]</scope>
    <source>
        <strain>GB-M1</strain>
    </source>
</reference>
<keyword id="KW-1185">Reference proteome</keyword>
<dbReference type="EMBL" id="AL590447">
    <property type="protein sequence ID" value="CAD25533.1"/>
    <property type="molecule type" value="Genomic_DNA"/>
</dbReference>
<dbReference type="RefSeq" id="NP_585929.1">
    <property type="nucleotide sequence ID" value="NM_001041551.1"/>
</dbReference>
<dbReference type="RefSeq" id="XP_965842.1">
    <property type="nucleotide sequence ID" value="XM_960749.1"/>
</dbReference>
<dbReference type="RefSeq" id="XP_965992.1">
    <property type="nucleotide sequence ID" value="XM_960899.1"/>
</dbReference>
<dbReference type="GeneID" id="859357"/>
<dbReference type="KEGG" id="ecu:ECU07_0010"/>
<dbReference type="VEuPathDB" id="MicrosporidiaDB:ECU07_0010"/>
<dbReference type="HOGENOM" id="CLU_1331943_0_0_1"/>
<dbReference type="InParanoid" id="P0CT03"/>
<dbReference type="Proteomes" id="UP000000819">
    <property type="component" value="Chromosome VII"/>
</dbReference>
<feature type="chain" id="PRO_0000223108" description="UPF0328 protein ECU07_0010">
    <location>
        <begin position="1"/>
        <end position="238"/>
    </location>
</feature>
<feature type="region of interest" description="Disordered" evidence="1">
    <location>
        <begin position="1"/>
        <end position="154"/>
    </location>
</feature>
<feature type="region of interest" description="Disordered" evidence="1">
    <location>
        <begin position="211"/>
        <end position="238"/>
    </location>
</feature>
<feature type="compositionally biased region" description="Basic and acidic residues" evidence="1">
    <location>
        <begin position="106"/>
        <end position="128"/>
    </location>
</feature>
<feature type="compositionally biased region" description="Polar residues" evidence="1">
    <location>
        <begin position="129"/>
        <end position="152"/>
    </location>
</feature>
<protein>
    <recommendedName>
        <fullName>UPF0328 protein ECU07_0010</fullName>
    </recommendedName>
</protein>
<comment type="similarity">
    <text evidence="2">Belongs to the UPF0328 family.</text>
</comment>
<sequence>MAAPTQLPETAKPKHSNQSEAGPAPLASPTAPMPRPASHLAPMPSDHPDFRSKSARLRCQPPRTNNCGTFKQPPSVAATSRPKPGNPFLQPPTKGTPPPKKKKKNHTEGCHTHEANPEPNTKHTETESPKPQTSTQHHTPITIPSSLLSQNTQREKRGLPLLTSRPSTIPANTYQPQSPHIHSHTPLQRPISTALLHQNLHIRARNIRHTGRLHGSPTKGAQTAQQAQPHPPKQLATL</sequence>
<proteinExistence type="inferred from homology"/>
<organism>
    <name type="scientific">Encephalitozoon cuniculi (strain GB-M1)</name>
    <name type="common">Microsporidian parasite</name>
    <dbReference type="NCBI Taxonomy" id="284813"/>
    <lineage>
        <taxon>Eukaryota</taxon>
        <taxon>Fungi</taxon>
        <taxon>Fungi incertae sedis</taxon>
        <taxon>Microsporidia</taxon>
        <taxon>Unikaryonidae</taxon>
        <taxon>Encephalitozoon</taxon>
    </lineage>
</organism>
<accession>P0CT03</accession>
<accession>Q8STH9</accession>
<name>Y701_ENCCU</name>
<gene>
    <name type="ordered locus">ECU07_0010</name>
</gene>